<gene>
    <name evidence="15" type="primary">Scn9a</name>
</gene>
<proteinExistence type="evidence at protein level"/>
<reference key="1">
    <citation type="journal article" date="1997" name="Proc. Natl. Acad. Sci. U.S.A.">
        <title>Identification of PN1, a predominant voltage-dependent sodium channel expressed principally in peripheral neurons.</title>
        <authorList>
            <person name="Toledo-Aral J.J."/>
            <person name="Moss B.L."/>
            <person name="He Z.J."/>
            <person name="Koszowski A.G."/>
            <person name="Whisenand T."/>
            <person name="Levinson S.R."/>
            <person name="Wolf J.J."/>
            <person name="Silos-Santiago I."/>
            <person name="Halegoua S."/>
            <person name="Mandel G."/>
        </authorList>
    </citation>
    <scope>NUCLEOTIDE SEQUENCE [MRNA]</scope>
    <scope>TISSUE SPECIFICITY</scope>
    <scope>SUBCELLULAR LOCATION</scope>
</reference>
<reference key="2">
    <citation type="journal article" date="1997" name="J. Biol. Chem.">
        <title>A novel tetrodotoxin-sensitive, voltage-gated sodium channel expressed in rat and human dorsal root ganglia.</title>
        <authorList>
            <person name="Sangameswaran L."/>
            <person name="Fish L.M."/>
            <person name="Koch B.D."/>
            <person name="Rabert D.K."/>
            <person name="Delgado S.G."/>
            <person name="Ilnicka M."/>
            <person name="Jakeman L.B."/>
            <person name="Novakovic S."/>
            <person name="Wong K."/>
            <person name="Sze P."/>
            <person name="Tzoumaka E."/>
            <person name="Stewart G.R."/>
            <person name="Herman R.C."/>
            <person name="Chan H."/>
            <person name="Eglen R.M."/>
            <person name="Hunter J.C."/>
        </authorList>
    </citation>
    <scope>NUCLEOTIDE SEQUENCE [MRNA]</scope>
    <scope>TISSUE SPECIFICITY</scope>
    <source>
        <tissue>Spinal ganglion</tissue>
    </source>
</reference>
<reference key="3">
    <citation type="submission" date="2007-09" db="UniProtKB">
        <authorList>
            <person name="Lubec G."/>
            <person name="Kang S.U."/>
            <person name="Lubec S."/>
        </authorList>
    </citation>
    <scope>PROTEIN SEQUENCE OF 527-547</scope>
    <scope>IDENTIFICATION BY MASS SPECTROMETRY</scope>
    <source>
        <strain>Sprague-Dawley</strain>
        <tissue>Brain</tissue>
    </source>
</reference>
<reference key="4">
    <citation type="journal article" date="2004" name="J. Biol. Chem.">
        <title>Regulation of neuronal voltage-gated sodium channels by the ubiquitin-protein ligases Nedd4 and Nedd4-2.</title>
        <authorList>
            <person name="Fotia A.B."/>
            <person name="Ekberg J."/>
            <person name="Adams D.J."/>
            <person name="Cook D.I."/>
            <person name="Poronnik P."/>
            <person name="Kumar S."/>
        </authorList>
    </citation>
    <scope>FUNCTION</scope>
</reference>
<reference key="5">
    <citation type="journal article" date="2014" name="Proc. Natl. Acad. Sci. U.S.A.">
        <title>A disulfide tether stabilizes the block of sodium channels by the conotoxin muO[section sign]-GVIIJ.</title>
        <authorList>
            <person name="Gajewiak J."/>
            <person name="Azam L."/>
            <person name="Imperial J."/>
            <person name="Walewska A."/>
            <person name="Green B.R."/>
            <person name="Bandyopadhyay P.K."/>
            <person name="Raghuraman S."/>
            <person name="Ueberheide B."/>
            <person name="Bern M."/>
            <person name="Zhou H.M."/>
            <person name="Minassian N.A."/>
            <person name="Hagan R.H."/>
            <person name="Flinspach M."/>
            <person name="Liu Y."/>
            <person name="Bulaj G."/>
            <person name="Wickenden A.D."/>
            <person name="Olivera B.M."/>
            <person name="Yoshikami D."/>
            <person name="Zhang M.M."/>
        </authorList>
    </citation>
    <scope>ACTIVITY REGULATION</scope>
</reference>
<evidence type="ECO:0000250" key="1">
    <source>
        <dbReference type="UniProtKB" id="D0E0C2"/>
    </source>
</evidence>
<evidence type="ECO:0000250" key="2">
    <source>
        <dbReference type="UniProtKB" id="P04775"/>
    </source>
</evidence>
<evidence type="ECO:0000250" key="3">
    <source>
        <dbReference type="UniProtKB" id="P35499"/>
    </source>
</evidence>
<evidence type="ECO:0000250" key="4">
    <source>
        <dbReference type="UniProtKB" id="Q15858"/>
    </source>
</evidence>
<evidence type="ECO:0000250" key="5">
    <source>
        <dbReference type="UniProtKB" id="Q62205"/>
    </source>
</evidence>
<evidence type="ECO:0000255" key="6"/>
<evidence type="ECO:0000255" key="7">
    <source>
        <dbReference type="PROSITE-ProRule" id="PRU00116"/>
    </source>
</evidence>
<evidence type="ECO:0000256" key="8">
    <source>
        <dbReference type="SAM" id="MobiDB-lite"/>
    </source>
</evidence>
<evidence type="ECO:0000269" key="9">
    <source>
    </source>
</evidence>
<evidence type="ECO:0000269" key="10">
    <source>
    </source>
</evidence>
<evidence type="ECO:0000269" key="11">
    <source>
    </source>
</evidence>
<evidence type="ECO:0000303" key="12">
    <source>
    </source>
</evidence>
<evidence type="ECO:0000305" key="13"/>
<evidence type="ECO:0000305" key="14">
    <source>
    </source>
</evidence>
<evidence type="ECO:0000312" key="15">
    <source>
        <dbReference type="RGD" id="69368"/>
    </source>
</evidence>
<name>SCN9A_RAT</name>
<organism>
    <name type="scientific">Rattus norvegicus</name>
    <name type="common">Rat</name>
    <dbReference type="NCBI Taxonomy" id="10116"/>
    <lineage>
        <taxon>Eukaryota</taxon>
        <taxon>Metazoa</taxon>
        <taxon>Chordata</taxon>
        <taxon>Craniata</taxon>
        <taxon>Vertebrata</taxon>
        <taxon>Euteleostomi</taxon>
        <taxon>Mammalia</taxon>
        <taxon>Eutheria</taxon>
        <taxon>Euarchontoglires</taxon>
        <taxon>Glires</taxon>
        <taxon>Rodentia</taxon>
        <taxon>Myomorpha</taxon>
        <taxon>Muroidea</taxon>
        <taxon>Muridae</taxon>
        <taxon>Murinae</taxon>
        <taxon>Rattus</taxon>
    </lineage>
</organism>
<accession>O08562</accession>
<protein>
    <recommendedName>
        <fullName evidence="4">Sodium channel protein type 9 subunit alpha</fullName>
    </recommendedName>
    <alternativeName>
        <fullName>Peripheral sodium channel 1</fullName>
        <shortName evidence="12">PN1</shortName>
    </alternativeName>
    <alternativeName>
        <fullName>Sodium channel protein type IX subunit alpha</fullName>
    </alternativeName>
    <alternativeName>
        <fullName>Voltage-gated sodium channel subunit alpha Nav1.7</fullName>
    </alternativeName>
</protein>
<dbReference type="EMBL" id="U79568">
    <property type="protein sequence ID" value="AAB50403.1"/>
    <property type="molecule type" value="mRNA"/>
</dbReference>
<dbReference type="EMBL" id="AF000368">
    <property type="protein sequence ID" value="AAB80701.1"/>
    <property type="molecule type" value="mRNA"/>
</dbReference>
<dbReference type="RefSeq" id="NP_579823.1">
    <property type="nucleotide sequence ID" value="NM_133289.2"/>
</dbReference>
<dbReference type="BMRB" id="O08562"/>
<dbReference type="SMR" id="O08562"/>
<dbReference type="BioGRID" id="249364">
    <property type="interactions" value="2"/>
</dbReference>
<dbReference type="FunCoup" id="O08562">
    <property type="interactions" value="1727"/>
</dbReference>
<dbReference type="STRING" id="10116.ENSRNOP00000059170"/>
<dbReference type="BindingDB" id="O08562"/>
<dbReference type="ChEMBL" id="CHEMBL3312"/>
<dbReference type="GuidetoPHARMACOLOGY" id="584"/>
<dbReference type="GlyCosmos" id="O08562">
    <property type="glycosylation" value="5 sites, No reported glycans"/>
</dbReference>
<dbReference type="GlyGen" id="O08562">
    <property type="glycosylation" value="5 sites"/>
</dbReference>
<dbReference type="iPTMnet" id="O08562"/>
<dbReference type="PhosphoSitePlus" id="O08562"/>
<dbReference type="SwissPalm" id="O08562"/>
<dbReference type="PaxDb" id="10116-ENSRNOP00000059170"/>
<dbReference type="ABCD" id="O08562">
    <property type="antibodies" value="1 sequenced antibody"/>
</dbReference>
<dbReference type="GeneID" id="78956"/>
<dbReference type="KEGG" id="rno:78956"/>
<dbReference type="UCSC" id="RGD:69368">
    <property type="organism name" value="rat"/>
</dbReference>
<dbReference type="AGR" id="RGD:69368"/>
<dbReference type="CTD" id="6335"/>
<dbReference type="RGD" id="69368">
    <property type="gene designation" value="Scn9a"/>
</dbReference>
<dbReference type="VEuPathDB" id="HostDB:ENSRNOG00000006639"/>
<dbReference type="VEuPathDB" id="HostDB:ENSRNOG00000053122"/>
<dbReference type="eggNOG" id="KOG2301">
    <property type="taxonomic scope" value="Eukaryota"/>
</dbReference>
<dbReference type="HOGENOM" id="CLU_000540_5_0_1"/>
<dbReference type="InParanoid" id="O08562"/>
<dbReference type="OrthoDB" id="67781at9989"/>
<dbReference type="PhylomeDB" id="O08562"/>
<dbReference type="TreeFam" id="TF323985"/>
<dbReference type="PRO" id="PR:O08562"/>
<dbReference type="Proteomes" id="UP000002494">
    <property type="component" value="Chromosome 3"/>
</dbReference>
<dbReference type="Bgee" id="ENSRNOG00000006639">
    <property type="expression patterns" value="Expressed in cerebral cortex and 6 other cell types or tissues"/>
</dbReference>
<dbReference type="GO" id="GO:0030424">
    <property type="term" value="C:axon"/>
    <property type="evidence" value="ECO:0000314"/>
    <property type="project" value="ARUK-UCL"/>
</dbReference>
<dbReference type="GO" id="GO:0043679">
    <property type="term" value="C:axon terminus"/>
    <property type="evidence" value="ECO:0000250"/>
    <property type="project" value="UniProtKB"/>
</dbReference>
<dbReference type="GO" id="GO:0033268">
    <property type="term" value="C:node of Ranvier"/>
    <property type="evidence" value="ECO:0000266"/>
    <property type="project" value="RGD"/>
</dbReference>
<dbReference type="GO" id="GO:0005886">
    <property type="term" value="C:plasma membrane"/>
    <property type="evidence" value="ECO:0000266"/>
    <property type="project" value="RGD"/>
</dbReference>
<dbReference type="GO" id="GO:0001518">
    <property type="term" value="C:voltage-gated sodium channel complex"/>
    <property type="evidence" value="ECO:0000318"/>
    <property type="project" value="GO_Central"/>
</dbReference>
<dbReference type="GO" id="GO:0005248">
    <property type="term" value="F:voltage-gated sodium channel activity"/>
    <property type="evidence" value="ECO:0000250"/>
    <property type="project" value="UniProtKB"/>
</dbReference>
<dbReference type="GO" id="GO:0098870">
    <property type="term" value="P:action potential propagation"/>
    <property type="evidence" value="ECO:0000250"/>
    <property type="project" value="UniProtKB"/>
</dbReference>
<dbReference type="GO" id="GO:0061368">
    <property type="term" value="P:behavioral response to formalin induced pain"/>
    <property type="evidence" value="ECO:0000315"/>
    <property type="project" value="RGD"/>
</dbReference>
<dbReference type="GO" id="GO:0048266">
    <property type="term" value="P:behavioral response to pain"/>
    <property type="evidence" value="ECO:0000266"/>
    <property type="project" value="RGD"/>
</dbReference>
<dbReference type="GO" id="GO:0007623">
    <property type="term" value="P:circadian rhythm"/>
    <property type="evidence" value="ECO:0000266"/>
    <property type="project" value="RGD"/>
</dbReference>
<dbReference type="GO" id="GO:0050974">
    <property type="term" value="P:detection of mechanical stimulus involved in sensory perception"/>
    <property type="evidence" value="ECO:0000266"/>
    <property type="project" value="RGD"/>
</dbReference>
<dbReference type="GO" id="GO:0050965">
    <property type="term" value="P:detection of temperature stimulus involved in sensory perception of pain"/>
    <property type="evidence" value="ECO:0000266"/>
    <property type="project" value="RGD"/>
</dbReference>
<dbReference type="GO" id="GO:0006954">
    <property type="term" value="P:inflammatory response"/>
    <property type="evidence" value="ECO:0000266"/>
    <property type="project" value="RGD"/>
</dbReference>
<dbReference type="GO" id="GO:0086010">
    <property type="term" value="P:membrane depolarization during action potential"/>
    <property type="evidence" value="ECO:0000318"/>
    <property type="project" value="GO_Central"/>
</dbReference>
<dbReference type="GO" id="GO:0045759">
    <property type="term" value="P:negative regulation of action potential"/>
    <property type="evidence" value="ECO:0000315"/>
    <property type="project" value="RGD"/>
</dbReference>
<dbReference type="GO" id="GO:0019228">
    <property type="term" value="P:neuronal action potential"/>
    <property type="evidence" value="ECO:0000266"/>
    <property type="project" value="RGD"/>
</dbReference>
<dbReference type="GO" id="GO:0009791">
    <property type="term" value="P:post-embryonic development"/>
    <property type="evidence" value="ECO:0000266"/>
    <property type="project" value="RGD"/>
</dbReference>
<dbReference type="GO" id="GO:0009636">
    <property type="term" value="P:response to toxic substance"/>
    <property type="evidence" value="ECO:0000266"/>
    <property type="project" value="RGD"/>
</dbReference>
<dbReference type="GO" id="GO:0043179">
    <property type="term" value="P:rhythmic excitation"/>
    <property type="evidence" value="ECO:0000303"/>
    <property type="project" value="RGD"/>
</dbReference>
<dbReference type="GO" id="GO:0019233">
    <property type="term" value="P:sensory perception of pain"/>
    <property type="evidence" value="ECO:0000250"/>
    <property type="project" value="UniProtKB"/>
</dbReference>
<dbReference type="CDD" id="cd13433">
    <property type="entry name" value="Na_channel_gate"/>
    <property type="match status" value="1"/>
</dbReference>
<dbReference type="FunFam" id="1.10.238.10:FF:000002">
    <property type="entry name" value="Sodium channel protein"/>
    <property type="match status" value="1"/>
</dbReference>
<dbReference type="FunFam" id="1.10.287.70:FF:000001">
    <property type="entry name" value="Sodium channel protein"/>
    <property type="match status" value="1"/>
</dbReference>
<dbReference type="FunFam" id="1.10.287.70:FF:000006">
    <property type="entry name" value="Sodium channel protein"/>
    <property type="match status" value="1"/>
</dbReference>
<dbReference type="FunFam" id="1.20.120.350:FF:000002">
    <property type="entry name" value="Sodium channel protein"/>
    <property type="match status" value="1"/>
</dbReference>
<dbReference type="FunFam" id="1.20.120.350:FF:000004">
    <property type="entry name" value="Sodium channel protein"/>
    <property type="match status" value="1"/>
</dbReference>
<dbReference type="FunFam" id="1.20.120.350:FF:000005">
    <property type="entry name" value="Sodium channel protein"/>
    <property type="match status" value="1"/>
</dbReference>
<dbReference type="FunFam" id="1.20.5.1190:FF:000001">
    <property type="entry name" value="Sodium channel protein"/>
    <property type="match status" value="1"/>
</dbReference>
<dbReference type="FunFam" id="1.20.120.350:FF:000003">
    <property type="entry name" value="Voltage-dependent sodium channel"/>
    <property type="match status" value="1"/>
</dbReference>
<dbReference type="Gene3D" id="1.10.287.70">
    <property type="match status" value="4"/>
</dbReference>
<dbReference type="Gene3D" id="1.10.238.10">
    <property type="entry name" value="EF-hand"/>
    <property type="match status" value="1"/>
</dbReference>
<dbReference type="Gene3D" id="1.20.5.1190">
    <property type="entry name" value="iswi atpase"/>
    <property type="match status" value="1"/>
</dbReference>
<dbReference type="Gene3D" id="1.20.120.350">
    <property type="entry name" value="Voltage-gated potassium channels. Chain C"/>
    <property type="match status" value="4"/>
</dbReference>
<dbReference type="InterPro" id="IPR005821">
    <property type="entry name" value="Ion_trans_dom"/>
</dbReference>
<dbReference type="InterPro" id="IPR000048">
    <property type="entry name" value="IQ_motif_EF-hand-BS"/>
</dbReference>
<dbReference type="InterPro" id="IPR001696">
    <property type="entry name" value="Na_channel_asu"/>
</dbReference>
<dbReference type="InterPro" id="IPR044564">
    <property type="entry name" value="Na_chnl_inactivation_gate"/>
</dbReference>
<dbReference type="InterPro" id="IPR010526">
    <property type="entry name" value="Na_trans_assoc_dom"/>
</dbReference>
<dbReference type="InterPro" id="IPR024583">
    <property type="entry name" value="Na_trans_cytopl"/>
</dbReference>
<dbReference type="InterPro" id="IPR043203">
    <property type="entry name" value="VGCC_Ca_Na"/>
</dbReference>
<dbReference type="InterPro" id="IPR027359">
    <property type="entry name" value="Volt_channel_dom_sf"/>
</dbReference>
<dbReference type="PANTHER" id="PTHR10037:SF221">
    <property type="entry name" value="SODIUM CHANNEL PROTEIN TYPE 9 SUBUNIT ALPHA"/>
    <property type="match status" value="1"/>
</dbReference>
<dbReference type="PANTHER" id="PTHR10037">
    <property type="entry name" value="VOLTAGE-GATED CATION CHANNEL CALCIUM AND SODIUM"/>
    <property type="match status" value="1"/>
</dbReference>
<dbReference type="Pfam" id="PF00520">
    <property type="entry name" value="Ion_trans"/>
    <property type="match status" value="4"/>
</dbReference>
<dbReference type="Pfam" id="PF24609">
    <property type="entry name" value="IQ_SCN5A_C"/>
    <property type="match status" value="1"/>
</dbReference>
<dbReference type="Pfam" id="PF06512">
    <property type="entry name" value="Na_trans_assoc"/>
    <property type="match status" value="1"/>
</dbReference>
<dbReference type="Pfam" id="PF11933">
    <property type="entry name" value="Na_trans_cytopl"/>
    <property type="match status" value="1"/>
</dbReference>
<dbReference type="PRINTS" id="PR00170">
    <property type="entry name" value="NACHANNEL"/>
</dbReference>
<dbReference type="SMART" id="SM00015">
    <property type="entry name" value="IQ"/>
    <property type="match status" value="1"/>
</dbReference>
<dbReference type="SUPFAM" id="SSF81324">
    <property type="entry name" value="Voltage-gated potassium channels"/>
    <property type="match status" value="4"/>
</dbReference>
<feature type="chain" id="PRO_0000048505" description="Sodium channel protein type 9 subunit alpha">
    <location>
        <begin position="1"/>
        <end position="1984"/>
    </location>
</feature>
<feature type="topological domain" description="Cytoplasmic" evidence="13">
    <location>
        <begin position="1"/>
        <end position="125"/>
    </location>
</feature>
<feature type="transmembrane region" description="Helical; Name=S1 of repeat I" evidence="4">
    <location>
        <begin position="126"/>
        <end position="145"/>
    </location>
</feature>
<feature type="topological domain" description="Extracellular" evidence="13">
    <location>
        <begin position="146"/>
        <end position="150"/>
    </location>
</feature>
<feature type="transmembrane region" description="Helical; Name=S2 of repeat I" evidence="4">
    <location>
        <begin position="151"/>
        <end position="172"/>
    </location>
</feature>
<feature type="topological domain" description="Cytoplasmic" evidence="13">
    <location>
        <begin position="173"/>
        <end position="185"/>
    </location>
</feature>
<feature type="transmembrane region" description="Helical; Name=S3 of repeat I" evidence="4">
    <location>
        <begin position="186"/>
        <end position="204"/>
    </location>
</feature>
<feature type="topological domain" description="Extracellular" evidence="13">
    <location>
        <begin position="205"/>
        <end position="210"/>
    </location>
</feature>
<feature type="transmembrane region" description="Helical; Name=S4 of repeat I" evidence="4">
    <location>
        <begin position="211"/>
        <end position="227"/>
    </location>
</feature>
<feature type="topological domain" description="Cytoplasmic" evidence="13">
    <location>
        <begin position="228"/>
        <end position="241"/>
    </location>
</feature>
<feature type="transmembrane region" description="Helical; Name=S5 of repeat I" evidence="4">
    <location>
        <begin position="242"/>
        <end position="267"/>
    </location>
</feature>
<feature type="topological domain" description="Extracellular" evidence="13">
    <location>
        <begin position="268"/>
        <end position="346"/>
    </location>
</feature>
<feature type="intramembrane region" description="Pore-forming" evidence="4">
    <location>
        <begin position="347"/>
        <end position="363"/>
    </location>
</feature>
<feature type="topological domain" description="Extracellular" evidence="13">
    <location>
        <begin position="364"/>
        <end position="376"/>
    </location>
</feature>
<feature type="transmembrane region" description="Helical; Name=S6 of repeat I" evidence="4">
    <location>
        <begin position="377"/>
        <end position="402"/>
    </location>
</feature>
<feature type="topological domain" description="Cytoplasmic" evidence="13">
    <location>
        <begin position="403"/>
        <end position="744"/>
    </location>
</feature>
<feature type="transmembrane region" description="Helical; Name=S1 of repeat II" evidence="4">
    <location>
        <begin position="745"/>
        <end position="761"/>
    </location>
</feature>
<feature type="topological domain" description="Extracellular" evidence="13">
    <location>
        <begin position="762"/>
        <end position="770"/>
    </location>
</feature>
<feature type="transmembrane region" description="Helical; Name=S2 of repeat II" evidence="4">
    <location>
        <begin position="771"/>
        <end position="795"/>
    </location>
</feature>
<feature type="topological domain" description="Cytoplasmic" evidence="13">
    <location>
        <begin position="796"/>
        <end position="804"/>
    </location>
</feature>
<feature type="transmembrane region" description="Helical; Name=S3 of repeat II" evidence="4">
    <location>
        <begin position="805"/>
        <end position="821"/>
    </location>
</feature>
<feature type="topological domain" description="Extracellular" evidence="13">
    <location>
        <begin position="822"/>
        <end position="830"/>
    </location>
</feature>
<feature type="transmembrane region" description="Helical; Name=S4 of repeat II" evidence="4">
    <location>
        <begin position="831"/>
        <end position="847"/>
    </location>
</feature>
<feature type="topological domain" description="Cytoplasmic" evidence="13">
    <location>
        <begin position="848"/>
        <end position="864"/>
    </location>
</feature>
<feature type="transmembrane region" description="Helical; Name=S5 of repeat II" evidence="4">
    <location>
        <begin position="865"/>
        <end position="887"/>
    </location>
</feature>
<feature type="topological domain" description="Extracellular" evidence="13">
    <location>
        <begin position="888"/>
        <end position="914"/>
    </location>
</feature>
<feature type="intramembrane region" description="Pore-forming" evidence="4">
    <location>
        <begin position="915"/>
        <end position="927"/>
    </location>
</feature>
<feature type="topological domain" description="Extracellular" evidence="13">
    <location>
        <begin position="928"/>
        <end position="939"/>
    </location>
</feature>
<feature type="transmembrane region" description="Helical; Name=S6 of repeat II" evidence="4">
    <location>
        <begin position="940"/>
        <end position="966"/>
    </location>
</feature>
<feature type="topological domain" description="Cytoplasmic" evidence="13">
    <location>
        <begin position="967"/>
        <end position="1185"/>
    </location>
</feature>
<feature type="transmembrane region" description="Helical; Name=S1 of repeat III" evidence="4">
    <location>
        <begin position="1186"/>
        <end position="1210"/>
    </location>
</feature>
<feature type="topological domain" description="Extracellular" evidence="13">
    <location>
        <begin position="1211"/>
        <end position="1222"/>
    </location>
</feature>
<feature type="transmembrane region" description="Helical; Name=S2 of repeat III" evidence="4">
    <location>
        <begin position="1223"/>
        <end position="1248"/>
    </location>
</feature>
<feature type="topological domain" description="Cytoplasmic" evidence="13">
    <location>
        <begin position="1249"/>
        <end position="1250"/>
    </location>
</feature>
<feature type="transmembrane region" description="Helical; Name=S3 of repeat III" evidence="4">
    <location>
        <begin position="1251"/>
        <end position="1276"/>
    </location>
</feature>
<feature type="topological domain" description="Extracellular" evidence="13">
    <location>
        <begin position="1277"/>
        <end position="1285"/>
    </location>
</feature>
<feature type="transmembrane region" description="Helical; Name=S4 of repeat III" evidence="4">
    <location>
        <begin position="1286"/>
        <end position="1302"/>
    </location>
</feature>
<feature type="topological domain" description="Cytoplasmic" evidence="13">
    <location>
        <begin position="1303"/>
        <end position="1315"/>
    </location>
</feature>
<feature type="transmembrane region" description="Helical; Name=S5 of repeat III" evidence="4">
    <location>
        <begin position="1316"/>
        <end position="1340"/>
    </location>
</feature>
<feature type="topological domain" description="Extracellular" evidence="13">
    <location>
        <begin position="1341"/>
        <end position="1392"/>
    </location>
</feature>
<feature type="intramembrane region" description="Pore-forming" evidence="4">
    <location>
        <begin position="1393"/>
        <end position="1403"/>
    </location>
</feature>
<feature type="topological domain" description="Extracellular" evidence="13">
    <location>
        <begin position="1404"/>
        <end position="1429"/>
    </location>
</feature>
<feature type="transmembrane region" description="Helical; Name=S6 of repeat III" evidence="4">
    <location>
        <begin position="1430"/>
        <end position="1455"/>
    </location>
</feature>
<feature type="topological domain" description="Cytoplasmic" evidence="13">
    <location>
        <begin position="1456"/>
        <end position="1512"/>
    </location>
</feature>
<feature type="transmembrane region" description="Helical; Name=S1 of repeat IV" evidence="4">
    <location>
        <begin position="1513"/>
        <end position="1532"/>
    </location>
</feature>
<feature type="topological domain" description="Extracellular" evidence="13">
    <location>
        <begin position="1533"/>
        <end position="1543"/>
    </location>
</feature>
<feature type="transmembrane region" description="Helical; Name=S2 of repeat IV" evidence="4">
    <location>
        <begin position="1544"/>
        <end position="1565"/>
    </location>
</feature>
<feature type="topological domain" description="Cytoplasmic" evidence="13">
    <location>
        <begin position="1566"/>
        <end position="1574"/>
    </location>
</feature>
<feature type="transmembrane region" description="Helical; Name=S3 of repeat IV" evidence="4">
    <location>
        <begin position="1575"/>
        <end position="1596"/>
    </location>
</feature>
<feature type="topological domain" description="Extracellular" evidence="13">
    <location>
        <begin position="1597"/>
        <end position="1605"/>
    </location>
</feature>
<feature type="transmembrane region" description="Helical; Name=S4 of repeat IV" evidence="4">
    <location>
        <begin position="1606"/>
        <end position="1625"/>
    </location>
</feature>
<feature type="topological domain" description="Cytoplasmic" evidence="13">
    <location>
        <begin position="1626"/>
        <end position="1638"/>
    </location>
</feature>
<feature type="transmembrane region" description="Helical; Name=S5 of repeat IV" evidence="4">
    <location>
        <begin position="1639"/>
        <end position="1661"/>
    </location>
</feature>
<feature type="topological domain" description="Extracellular" evidence="13">
    <location>
        <begin position="1662"/>
        <end position="1684"/>
    </location>
</feature>
<feature type="intramembrane region" description="Pore-forming" evidence="4">
    <location>
        <begin position="1685"/>
        <end position="1697"/>
    </location>
</feature>
<feature type="topological domain" description="Extracellular" evidence="13">
    <location>
        <begin position="1698"/>
        <end position="1731"/>
    </location>
</feature>
<feature type="transmembrane region" description="Helical; Name=S6 of repeat IV" evidence="4">
    <location>
        <begin position="1732"/>
        <end position="1757"/>
    </location>
</feature>
<feature type="topological domain" description="Cytoplasmic" evidence="13">
    <location>
        <begin position="1758"/>
        <end position="1984"/>
    </location>
</feature>
<feature type="repeat" description="I" evidence="13">
    <location>
        <begin position="112"/>
        <end position="410"/>
    </location>
</feature>
<feature type="repeat" description="II" evidence="13">
    <location>
        <begin position="725"/>
        <end position="988"/>
    </location>
</feature>
<feature type="repeat" description="III" evidence="13">
    <location>
        <begin position="1178"/>
        <end position="1486"/>
    </location>
</feature>
<feature type="repeat" description="IV" evidence="13">
    <location>
        <begin position="1495"/>
        <end position="1793"/>
    </location>
</feature>
<feature type="domain" description="IQ" evidence="7">
    <location>
        <begin position="1887"/>
        <end position="1916"/>
    </location>
</feature>
<feature type="region of interest" description="Disordered" evidence="8">
    <location>
        <begin position="26"/>
        <end position="55"/>
    </location>
</feature>
<feature type="region of interest" description="Disordered" evidence="8">
    <location>
        <begin position="461"/>
        <end position="542"/>
    </location>
</feature>
<feature type="region of interest" description="Disordered" evidence="8">
    <location>
        <begin position="576"/>
        <end position="609"/>
    </location>
</feature>
<feature type="region of interest" description="Disordered" evidence="8">
    <location>
        <begin position="1015"/>
        <end position="1040"/>
    </location>
</feature>
<feature type="region of interest" description="Disordered" evidence="8">
    <location>
        <begin position="1103"/>
        <end position="1145"/>
    </location>
</feature>
<feature type="region of interest" description="Disordered" evidence="8">
    <location>
        <begin position="1916"/>
        <end position="1984"/>
    </location>
</feature>
<feature type="compositionally biased region" description="Basic and acidic residues" evidence="8">
    <location>
        <begin position="26"/>
        <end position="39"/>
    </location>
</feature>
<feature type="compositionally biased region" description="Low complexity" evidence="8">
    <location>
        <begin position="461"/>
        <end position="471"/>
    </location>
</feature>
<feature type="compositionally biased region" description="Basic residues" evidence="8">
    <location>
        <begin position="474"/>
        <end position="486"/>
    </location>
</feature>
<feature type="compositionally biased region" description="Basic and acidic residues" evidence="8">
    <location>
        <begin position="489"/>
        <end position="509"/>
    </location>
</feature>
<feature type="compositionally biased region" description="Basic and acidic residues" evidence="8">
    <location>
        <begin position="1019"/>
        <end position="1035"/>
    </location>
</feature>
<feature type="compositionally biased region" description="Acidic residues" evidence="8">
    <location>
        <begin position="1135"/>
        <end position="1145"/>
    </location>
</feature>
<feature type="compositionally biased region" description="Basic and acidic residues" evidence="8">
    <location>
        <begin position="1916"/>
        <end position="1930"/>
    </location>
</feature>
<feature type="compositionally biased region" description="Polar residues" evidence="8">
    <location>
        <begin position="1946"/>
        <end position="1958"/>
    </location>
</feature>
<feature type="compositionally biased region" description="Basic and acidic residues" evidence="8">
    <location>
        <begin position="1960"/>
        <end position="1984"/>
    </location>
</feature>
<feature type="site" description="Is directly targeted by the spider protoxin-II" evidence="4">
    <location>
        <position position="821"/>
    </location>
</feature>
<feature type="site" description="Is directly targeted by the spider protoxin-II" evidence="4">
    <location>
        <position position="826"/>
    </location>
</feature>
<feature type="modified residue" description="Phosphoserine; by PKC" evidence="4">
    <location>
        <position position="1488"/>
    </location>
</feature>
<feature type="glycosylation site" description="N-linked (GlcNAc...) asparagine" evidence="6">
    <location>
        <position position="209"/>
    </location>
</feature>
<feature type="glycosylation site" description="N-linked (GlcNAc...) asparagine" evidence="6">
    <location>
        <position position="283"/>
    </location>
</feature>
<feature type="glycosylation site" description="N-linked (GlcNAc...) asparagine" evidence="6">
    <location>
        <position position="1350"/>
    </location>
</feature>
<feature type="glycosylation site" description="N-linked (GlcNAc...) asparagine" evidence="6">
    <location>
        <position position="1364"/>
    </location>
</feature>
<feature type="glycosylation site" description="N-linked (GlcNAc...) asparagine" evidence="6">
    <location>
        <position position="1373"/>
    </location>
</feature>
<feature type="disulfide bond" evidence="1">
    <location>
        <begin position="275"/>
        <end position="324"/>
    </location>
</feature>
<feature type="disulfide bond" description="Interchain; with SCN2B or SCN4B" evidence="2">
    <location>
        <position position="894"/>
    </location>
</feature>
<feature type="disulfide bond" description="Interchain; with the conotoxin GVIIJ (when the channel is not linked to SCN2B or SCN4B; the bond to SCN2B or SCN4B protects the channel from the inhibition by toxin)" evidence="2">
    <location>
        <position position="894"/>
    </location>
</feature>
<feature type="disulfide bond" evidence="4">
    <location>
        <begin position="896"/>
        <end position="902"/>
    </location>
</feature>
<feature type="disulfide bond" evidence="1">
    <location>
        <begin position="934"/>
        <end position="943"/>
    </location>
</feature>
<feature type="disulfide bond" evidence="4">
    <location>
        <begin position="1348"/>
        <end position="1368"/>
    </location>
</feature>
<feature type="disulfide bond" evidence="4">
    <location>
        <begin position="1713"/>
        <end position="1728"/>
    </location>
</feature>
<sequence length="1984" mass="226039">MAMLPPPGPQSFVHFTKQSLALIEQRISEEKAKEHKDEKKDDEEEGPKPSSDLEAGKQLPFIYGDIPPGMVSEPLEDLDPYYADKKTFIVLNKGKAIFRFNATPALYMLSPFSPLRRISIKILVHSLFSMLIMCTILTNCIFMTLSNPPEWTKNVEYTFTGIYTFESLIKILARGFCVGEFTFLRDPWNWLDFVVIVFAYLTEFVNLGNVSALRTFRVLRALKTISVIPGLKTIVGALIQSVKKLSDVMILTVFCLSVFALIGLQLFMGNLKHKCFRKELEENETLESIMNTAESEEELKKYFYYLEGSKDALLCGFSTDSGQCPEGYICVKAGRNPDYGYTSFDTFSWAFLALFRLMTQDYWENLYQQTLRAAGKTYMIFFVVVIFLGSFYLINLILAVVAMAYEEQNQANIEEAKQKELEFQQMLDRLKKEQEEAEAIAAAAAEFTSIGRSRIMGLSESSSETSRLSSKSAKERRNRRKKKKQKMSSGEEKGDDEKLSKSGSEESIRKKSFHLGVEGHHRTREKRLSTPNQSPLSIRGSLFSARRSSRTSLFSFKGRGRDLGSETEFADDEHSIFGDNESRRGSLFVPHRPRERRSSNISQASRSPPVLPVNGKMHSAVDCNGVVSLVDGPSALMLPNGQLLPEVIIDKATSDDSGTTNQMRKKRLSSSYFLSEDMLNDPHLRQRAMSRASILTNTVEELEESRQKCPPWWYRFAHTFLIWNCSPYWIKFKKLIYFIVMDPFVDLAITICIVLNTLFMAMEHHPMTEEFKNVLAVGNLIFTGIFAAEMVLKLIAMDPYEYFQVGWNIFDSLIVTLSLIELFLADVEGLSVLRSFRLLRVFKLAKSWPTLNMLIKIIGNSVGALGNLTLVLAIIVFIFAVVGMQLFGKSYKECVCKINVDCKLPRWHMNDFFHSFLIVFRVLCGEWIETMWDCMEVAGQTMCLIVYMMVMVIGNLVVLNLFLALLLSSFSSDNLTAIEEDTDANNLQIAVARIKRGINYVKQTLREFILKSFSKKPKGSKDTKRTADPNNKKENYISNRTLAEMSKDHNFLKEKDRISGYGSSLDKSFMDENDYQSFIHNPSLTVTVPIAPGESDLEIMNTEELSSDSDSDYSKEKRNRSSSSECSTVDNPLPGEEEAEAEPVNADEPEACFTDGCVRRFPCCQVNVDSGKGKVWWTIRKTCYRIVEHSWFESFIVLMILLSSGALAFEDIYIEKKKTIKIILEYADKIFTYIFILEMLLKWVAYGYKTYFTNAWCWLDFLIVDVSLVTLVANTLGYSDLGPIKSLRTLRALRPLRALSRFEGMRVVVNALIGAIPSIMNVLLVCLIFWLIFSIMGVNLFAGKFYECVNTTDGSRFPTSQVANRSECFALMNVSGNVRWKNLKVNFDNVGLGYLSLLQVATFKGWMDIMYAAVDSVNVNEQPKYEYSLYMYIYFVIFIIFGSFFTLNLFIGVIIDNFNQQKKKLGGQDIFMTEEQKKYYNAMKKLGSKKPQKPIPRPGNKFQGCIFDLVTNQAFDITIMVLICLNMVTMMVEKEGQTEYMDYVLHWINMVFIILFTGECVLKLISLRHYYFTVGWNIFDFVVVILSIVGMFLAEMIEKYFVSPTLFRVIRLARIGRILRLIKGAKGIRTLLFALMMSLPALFNIGLLLFLVMFIYAIFGMSNFAYVKKEAGINDMFNFETFGNSMICLFQITTSAGWDGLLAPILNSAPPDCDPKKVHPGSSVEGDCGNPSVGIFYFVSYIIISFLVVVNMYIAVILENFSVATEESTEPLSEDDFEMFYEVWEKFDPDATQFIEFCKLSDFAAALDPPLLIAKPNKVQLIAMDLPMVSGDRIHCLDILFAFTKRVLGEGGEMDSLRSQMEERFMSANPSKVSYEPITTTLKRKQEEVSATIIQRAYRRYRLRQHVKNISSIYIKDGDRDDDLPNKEDTVFDNVNENSSPEKTDVTASTISPPSYDSVTKPDQEKYETDKTEKEDKEKDESRK</sequence>
<comment type="function">
    <text evidence="4 9">Pore-forming subunit of Nav1.7, a voltage-gated sodium (Nav) channel that directly mediates the depolarizing phase of action potentials in excitable membranes. Navs, also called VGSCs (voltage-gated sodium channels) or VDSCs (voltage-dependent sodium channels), operate by switching between closed and open conformations depending on the voltage difference across the membrane. In the open conformation they allow Na(+) ions to selectively pass through the pore, along their electrochemical gradient. The influx of Na(+) ions provokes membrane depolarization, initiating the propagation of electrical signals throughout cells and tissues (PubMed:15123669). Nav1.7 plays a crucial role in controlling the excitability and action potential propagation from nociceptor neurons, thereby contributing to the sensory perception of pain (By similarity).</text>
</comment>
<comment type="catalytic activity">
    <reaction evidence="4">
        <text>Na(+)(in) = Na(+)(out)</text>
        <dbReference type="Rhea" id="RHEA:34963"/>
        <dbReference type="ChEBI" id="CHEBI:29101"/>
    </reaction>
</comment>
<comment type="activity regulation">
    <text evidence="14">Inhibited by the conotoxin GVIIJ.</text>
</comment>
<comment type="subunit">
    <text evidence="3 4">The Nav1.7 voltage-gated sodium channel consists of an ion-conducting alpha subunit SCN9A which is functional on its own regulated by one or more beta-1 (SCN1B), beta-2 (SCN2B), beta-3 (SCN3B) and beta-4 (SCN4B) subunits. SCN1B and SCN3B are non-covalently associated with SCN9A. SCN2B and SCN4B are disulfide-linked to SCN9A. SCN1B regulates channel inactivation (By similarity). Interacts with NEDD4 and NEDD4L; regulates Nav1.7 activity most probably through ubiquitination and subsequent endocytosis (By similarity). Interacts with TMEM233; modulates the gating properties of NaV1.7 (By similarity).</text>
</comment>
<comment type="subcellular location">
    <subcellularLocation>
        <location evidence="4">Cell membrane</location>
        <topology evidence="4">Multi-pass membrane protein</topology>
    </subcellularLocation>
    <subcellularLocation>
        <location evidence="10">Cell projection</location>
        <location evidence="10">Neuron projection</location>
    </subcellularLocation>
    <subcellularLocation>
        <location evidence="4">Cell projection</location>
        <location evidence="4">Axon</location>
    </subcellularLocation>
    <text evidence="4 10">Localizes to neuron terminals (PubMed:9037087). Also detected at Nodes of Ranvier (By similarity).</text>
</comment>
<comment type="tissue specificity">
    <text evidence="10 11">Expressed at high level in the dorsal root ganglion and at much lower levels in the brain, sciatic nerve, nodose ganglia, heart, thyroid and adrenal glands and Schwann cells, but not in the cardiac and skeletal muscles, brain and liver.</text>
</comment>
<comment type="domain">
    <text evidence="13">The sequence contains 4 internal repeats, each with 5 hydrophobic segments (S1, S2, S3, S5, S6) and one positively charged segment (S4). Segments S4 are probably the voltage-sensors and are characterized by a series of positively charged amino acids at every third position.</text>
</comment>
<comment type="PTM">
    <text evidence="4">Phosphorylation at Ser-1488 by PKC in a highly conserved cytoplasmic loop increases peak sodium currents.</text>
</comment>
<comment type="PTM">
    <text evidence="5">Ubiquitinated by NEDD4L; which may promote its endocytosis. Does not seem to be ubiquitinated by NEDD4.</text>
</comment>
<comment type="PTM">
    <text evidence="5">Ubiquitinated by NEDD4L; which may promote its endocytosis.</text>
</comment>
<comment type="similarity">
    <text evidence="13">Belongs to the sodium channel (TC 1.A.1.10) family. Nav1.7/SCN9A subfamily.</text>
</comment>
<keyword id="KW-1003">Cell membrane</keyword>
<keyword id="KW-0966">Cell projection</keyword>
<keyword id="KW-0903">Direct protein sequencing</keyword>
<keyword id="KW-1015">Disulfide bond</keyword>
<keyword id="KW-0325">Glycoprotein</keyword>
<keyword id="KW-0407">Ion channel</keyword>
<keyword id="KW-0406">Ion transport</keyword>
<keyword id="KW-0472">Membrane</keyword>
<keyword id="KW-0597">Phosphoprotein</keyword>
<keyword id="KW-1185">Reference proteome</keyword>
<keyword id="KW-0677">Repeat</keyword>
<keyword id="KW-0915">Sodium</keyword>
<keyword id="KW-0894">Sodium channel</keyword>
<keyword id="KW-0739">Sodium transport</keyword>
<keyword id="KW-0812">Transmembrane</keyword>
<keyword id="KW-1133">Transmembrane helix</keyword>
<keyword id="KW-0813">Transport</keyword>
<keyword id="KW-0832">Ubl conjugation</keyword>
<keyword id="KW-0851">Voltage-gated channel</keyword>